<keyword id="KW-0238">DNA-binding</keyword>
<keyword id="KW-0479">Metal-binding</keyword>
<keyword id="KW-0539">Nucleus</keyword>
<keyword id="KW-0675">Receptor</keyword>
<keyword id="KW-1185">Reference proteome</keyword>
<keyword id="KW-0804">Transcription</keyword>
<keyword id="KW-0805">Transcription regulation</keyword>
<keyword id="KW-0862">Zinc</keyword>
<keyword id="KW-0863">Zinc-finger</keyword>
<accession>Q9W785</accession>
<reference key="1">
    <citation type="submission" date="1999-04" db="EMBL/GenBank/DDBJ databases">
        <title>Isolation of TR-alpha and TR-beta genes from Atlantic salmon.</title>
        <authorList>
            <person name="Rogers S.A."/>
            <person name="Sweeney G.E."/>
            <person name="Wigham T."/>
        </authorList>
    </citation>
    <scope>NUCLEOTIDE SEQUENCE [MRNA]</scope>
</reference>
<dbReference type="EMBL" id="AF146775">
    <property type="protein sequence ID" value="AAD38689.1"/>
    <property type="molecule type" value="mRNA"/>
</dbReference>
<dbReference type="RefSeq" id="NP_001117100.1">
    <property type="nucleotide sequence ID" value="NM_001123628.1"/>
</dbReference>
<dbReference type="SMR" id="Q9W785"/>
<dbReference type="STRING" id="8030.ENSSSAP00000108710"/>
<dbReference type="PaxDb" id="8030-ENSSSAP00000108710"/>
<dbReference type="GeneID" id="100136523"/>
<dbReference type="KEGG" id="sasa:100136523"/>
<dbReference type="CTD" id="100136523"/>
<dbReference type="OrthoDB" id="246592at7898"/>
<dbReference type="Proteomes" id="UP000087266">
    <property type="component" value="Chromosome ssa03"/>
</dbReference>
<dbReference type="GO" id="GO:0090575">
    <property type="term" value="C:RNA polymerase II transcription regulator complex"/>
    <property type="evidence" value="ECO:0007669"/>
    <property type="project" value="TreeGrafter"/>
</dbReference>
<dbReference type="GO" id="GO:0004879">
    <property type="term" value="F:nuclear receptor activity"/>
    <property type="evidence" value="ECO:0000250"/>
    <property type="project" value="UniProtKB"/>
</dbReference>
<dbReference type="GO" id="GO:0000978">
    <property type="term" value="F:RNA polymerase II cis-regulatory region sequence-specific DNA binding"/>
    <property type="evidence" value="ECO:0007669"/>
    <property type="project" value="TreeGrafter"/>
</dbReference>
<dbReference type="GO" id="GO:0070324">
    <property type="term" value="F:thyroid hormone binding"/>
    <property type="evidence" value="ECO:0000250"/>
    <property type="project" value="UniProtKB"/>
</dbReference>
<dbReference type="GO" id="GO:0008270">
    <property type="term" value="F:zinc ion binding"/>
    <property type="evidence" value="ECO:0007669"/>
    <property type="project" value="UniProtKB-KW"/>
</dbReference>
<dbReference type="GO" id="GO:0030154">
    <property type="term" value="P:cell differentiation"/>
    <property type="evidence" value="ECO:0007669"/>
    <property type="project" value="TreeGrafter"/>
</dbReference>
<dbReference type="GO" id="GO:0000122">
    <property type="term" value="P:negative regulation of transcription by RNA polymerase II"/>
    <property type="evidence" value="ECO:0007669"/>
    <property type="project" value="TreeGrafter"/>
</dbReference>
<dbReference type="GO" id="GO:0045944">
    <property type="term" value="P:positive regulation of transcription by RNA polymerase II"/>
    <property type="evidence" value="ECO:0007669"/>
    <property type="project" value="TreeGrafter"/>
</dbReference>
<dbReference type="GO" id="GO:0048384">
    <property type="term" value="P:retinoic acid receptor signaling pathway"/>
    <property type="evidence" value="ECO:0007669"/>
    <property type="project" value="TreeGrafter"/>
</dbReference>
<dbReference type="GO" id="GO:0002154">
    <property type="term" value="P:thyroid hormone receptor signaling pathway"/>
    <property type="evidence" value="ECO:0007669"/>
    <property type="project" value="TreeGrafter"/>
</dbReference>
<dbReference type="CDD" id="cd06961">
    <property type="entry name" value="NR_DBD_TR"/>
    <property type="match status" value="1"/>
</dbReference>
<dbReference type="CDD" id="cd06935">
    <property type="entry name" value="NR_LBD_TR"/>
    <property type="match status" value="1"/>
</dbReference>
<dbReference type="FunFam" id="1.10.565.10:FF:000006">
    <property type="entry name" value="Thyroid hormone receptor beta 2"/>
    <property type="match status" value="1"/>
</dbReference>
<dbReference type="FunFam" id="3.30.50.10:FF:000011">
    <property type="entry name" value="Thyroid hormone receptor beta isoform"/>
    <property type="match status" value="1"/>
</dbReference>
<dbReference type="Gene3D" id="3.30.50.10">
    <property type="entry name" value="Erythroid Transcription Factor GATA-1, subunit A"/>
    <property type="match status" value="1"/>
</dbReference>
<dbReference type="Gene3D" id="1.10.565.10">
    <property type="entry name" value="Retinoid X Receptor"/>
    <property type="match status" value="1"/>
</dbReference>
<dbReference type="InterPro" id="IPR035500">
    <property type="entry name" value="NHR-like_dom_sf"/>
</dbReference>
<dbReference type="InterPro" id="IPR000536">
    <property type="entry name" value="Nucl_hrmn_rcpt_lig-bd"/>
</dbReference>
<dbReference type="InterPro" id="IPR050234">
    <property type="entry name" value="Nuclear_hormone_rcpt_NR1"/>
</dbReference>
<dbReference type="InterPro" id="IPR001723">
    <property type="entry name" value="Nuclear_hrmn_rcpt"/>
</dbReference>
<dbReference type="InterPro" id="IPR001728">
    <property type="entry name" value="ThyrH_rcpt"/>
</dbReference>
<dbReference type="InterPro" id="IPR001628">
    <property type="entry name" value="Znf_hrmn_rcpt"/>
</dbReference>
<dbReference type="InterPro" id="IPR013088">
    <property type="entry name" value="Znf_NHR/GATA"/>
</dbReference>
<dbReference type="PANTHER" id="PTHR24082">
    <property type="entry name" value="NUCLEAR HORMONE RECEPTOR"/>
    <property type="match status" value="1"/>
</dbReference>
<dbReference type="PANTHER" id="PTHR24082:SF42">
    <property type="entry name" value="THYROID HORMONE RECEPTOR ALPHA"/>
    <property type="match status" value="1"/>
</dbReference>
<dbReference type="Pfam" id="PF00104">
    <property type="entry name" value="Hormone_recep"/>
    <property type="match status" value="1"/>
</dbReference>
<dbReference type="Pfam" id="PF00105">
    <property type="entry name" value="zf-C4"/>
    <property type="match status" value="1"/>
</dbReference>
<dbReference type="PRINTS" id="PR00398">
    <property type="entry name" value="STRDHORMONER"/>
</dbReference>
<dbReference type="PRINTS" id="PR00047">
    <property type="entry name" value="STROIDFINGER"/>
</dbReference>
<dbReference type="PRINTS" id="PR00546">
    <property type="entry name" value="THYROIDHORMR"/>
</dbReference>
<dbReference type="SMART" id="SM00430">
    <property type="entry name" value="HOLI"/>
    <property type="match status" value="1"/>
</dbReference>
<dbReference type="SMART" id="SM00399">
    <property type="entry name" value="ZnF_C4"/>
    <property type="match status" value="1"/>
</dbReference>
<dbReference type="SUPFAM" id="SSF57716">
    <property type="entry name" value="Glucocorticoid receptor-like (DNA-binding domain)"/>
    <property type="match status" value="1"/>
</dbReference>
<dbReference type="SUPFAM" id="SSF48508">
    <property type="entry name" value="Nuclear receptor ligand-binding domain"/>
    <property type="match status" value="1"/>
</dbReference>
<dbReference type="PROSITE" id="PS51843">
    <property type="entry name" value="NR_LBD"/>
    <property type="match status" value="1"/>
</dbReference>
<dbReference type="PROSITE" id="PS00031">
    <property type="entry name" value="NUCLEAR_REC_DBD_1"/>
    <property type="match status" value="1"/>
</dbReference>
<dbReference type="PROSITE" id="PS51030">
    <property type="entry name" value="NUCLEAR_REC_DBD_2"/>
    <property type="match status" value="1"/>
</dbReference>
<name>THA_SALSA</name>
<organism>
    <name type="scientific">Salmo salar</name>
    <name type="common">Atlantic salmon</name>
    <dbReference type="NCBI Taxonomy" id="8030"/>
    <lineage>
        <taxon>Eukaryota</taxon>
        <taxon>Metazoa</taxon>
        <taxon>Chordata</taxon>
        <taxon>Craniata</taxon>
        <taxon>Vertebrata</taxon>
        <taxon>Euteleostomi</taxon>
        <taxon>Actinopterygii</taxon>
        <taxon>Neopterygii</taxon>
        <taxon>Teleostei</taxon>
        <taxon>Protacanthopterygii</taxon>
        <taxon>Salmoniformes</taxon>
        <taxon>Salmonidae</taxon>
        <taxon>Salmoninae</taxon>
        <taxon>Salmo</taxon>
    </lineage>
</organism>
<proteinExistence type="evidence at transcript level"/>
<gene>
    <name type="primary">thra1</name>
    <name type="synonym">nr1a1</name>
</gene>
<sequence length="416" mass="47537">MEPISNVEDPNSSEGDEKRWPDGPKRKRKNSTCSVKSMSALSLSVQGYIPSYLEKDEPCVVCGDKATGYHYRCITCEGCKGFFRRTIQKNLHPAYSCKYDGCCIIDKITRNQCQLCRFRKCIAVCMAMDLVLDDSKRVAKRRLIEENREKRKKDEIVKTLQARPEPDSSEWELIRHVTEAHRHTNAQGSHWKQKRKFLPEDIGQSPRAPTPDGDKVDLEAFSEFTKIITPAITRVVDFAKKLPMFSELPCEDQIILLKGCCMEIMSLRAAVRYDPESETLTLSGEMAVKREQLKNGGLGVVSDAIFDLGKSLAQFNLDDSEVALLQAVLLMSSDRSGLTLVDKIEKCQETYLLAFEHYINHRKHNIPHFWPKLLMKVTDLRMIGACHASRFLHMKVECPNELFPPLFLEVFEDQEV</sequence>
<feature type="chain" id="PRO_0000053438" description="Thyroid hormone receptor alpha">
    <location>
        <begin position="1"/>
        <end position="416"/>
    </location>
</feature>
<feature type="domain" description="NR LBD" evidence="4">
    <location>
        <begin position="169"/>
        <end position="413"/>
    </location>
</feature>
<feature type="DNA-binding region" description="Nuclear receptor" evidence="3">
    <location>
        <begin position="59"/>
        <end position="133"/>
    </location>
</feature>
<feature type="zinc finger region" description="NR C4-type" evidence="3">
    <location>
        <begin position="59"/>
        <end position="79"/>
    </location>
</feature>
<feature type="zinc finger region" description="NR C4-type" evidence="3">
    <location>
        <begin position="97"/>
        <end position="121"/>
    </location>
</feature>
<feature type="region of interest" description="Modulating">
    <location>
        <begin position="1"/>
        <end position="58"/>
    </location>
</feature>
<feature type="region of interest" description="Disordered" evidence="5">
    <location>
        <begin position="1"/>
        <end position="30"/>
    </location>
</feature>
<feature type="compositionally biased region" description="Basic and acidic residues" evidence="5">
    <location>
        <begin position="15"/>
        <end position="24"/>
    </location>
</feature>
<feature type="binding site" evidence="2">
    <location>
        <position position="59"/>
    </location>
    <ligand>
        <name>Zn(2+)</name>
        <dbReference type="ChEBI" id="CHEBI:29105"/>
        <label>1</label>
    </ligand>
</feature>
<feature type="binding site" evidence="2">
    <location>
        <position position="62"/>
    </location>
    <ligand>
        <name>Zn(2+)</name>
        <dbReference type="ChEBI" id="CHEBI:29105"/>
        <label>1</label>
    </ligand>
</feature>
<feature type="binding site" evidence="2">
    <location>
        <position position="76"/>
    </location>
    <ligand>
        <name>Zn(2+)</name>
        <dbReference type="ChEBI" id="CHEBI:29105"/>
        <label>1</label>
    </ligand>
</feature>
<feature type="binding site" evidence="2">
    <location>
        <position position="79"/>
    </location>
    <ligand>
        <name>Zn(2+)</name>
        <dbReference type="ChEBI" id="CHEBI:29105"/>
        <label>1</label>
    </ligand>
</feature>
<feature type="binding site" evidence="2">
    <location>
        <position position="97"/>
    </location>
    <ligand>
        <name>Zn(2+)</name>
        <dbReference type="ChEBI" id="CHEBI:29105"/>
        <label>2</label>
    </ligand>
</feature>
<feature type="binding site" evidence="2">
    <location>
        <position position="103"/>
    </location>
    <ligand>
        <name>Zn(2+)</name>
        <dbReference type="ChEBI" id="CHEBI:29105"/>
        <label>2</label>
    </ligand>
</feature>
<feature type="binding site" evidence="2">
    <location>
        <position position="113"/>
    </location>
    <ligand>
        <name>Zn(2+)</name>
        <dbReference type="ChEBI" id="CHEBI:29105"/>
        <label>2</label>
    </ligand>
</feature>
<feature type="binding site" evidence="2">
    <location>
        <position position="116"/>
    </location>
    <ligand>
        <name>Zn(2+)</name>
        <dbReference type="ChEBI" id="CHEBI:29105"/>
        <label>2</label>
    </ligand>
</feature>
<feature type="binding site" evidence="1">
    <location>
        <position position="234"/>
    </location>
    <ligand>
        <name>3,3',5-triiodo-L-thyronine</name>
        <dbReference type="ChEBI" id="CHEBI:533015"/>
    </ligand>
</feature>
<feature type="binding site" evidence="1">
    <location>
        <position position="283"/>
    </location>
    <ligand>
        <name>3,3',5-triiodo-L-thyronine</name>
        <dbReference type="ChEBI" id="CHEBI:533015"/>
    </ligand>
</feature>
<protein>
    <recommendedName>
        <fullName>Thyroid hormone receptor alpha</fullName>
    </recommendedName>
    <alternativeName>
        <fullName>Nuclear receptor subfamily 1 group A member 1</fullName>
    </alternativeName>
</protein>
<evidence type="ECO:0000250" key="1">
    <source>
        <dbReference type="UniProtKB" id="P10827"/>
    </source>
</evidence>
<evidence type="ECO:0000250" key="2">
    <source>
        <dbReference type="UniProtKB" id="P10828"/>
    </source>
</evidence>
<evidence type="ECO:0000255" key="3">
    <source>
        <dbReference type="PROSITE-ProRule" id="PRU00407"/>
    </source>
</evidence>
<evidence type="ECO:0000255" key="4">
    <source>
        <dbReference type="PROSITE-ProRule" id="PRU01189"/>
    </source>
</evidence>
<evidence type="ECO:0000256" key="5">
    <source>
        <dbReference type="SAM" id="MobiDB-lite"/>
    </source>
</evidence>
<evidence type="ECO:0000305" key="6"/>
<comment type="function">
    <text>Nuclear hormone receptor that can act as a repressor or activator of transcription. High affinity receptor for thyroid hormones, including triiodothyronine and thyroxine.</text>
</comment>
<comment type="subcellular location">
    <subcellularLocation>
        <location>Nucleus</location>
    </subcellularLocation>
</comment>
<comment type="domain">
    <text>Composed of three domains: a modulating N-terminal domain, a DNA-binding domain and a C-terminal ligand-binding domain.</text>
</comment>
<comment type="similarity">
    <text evidence="6">Belongs to the nuclear hormone receptor family. NR1 subfamily.</text>
</comment>